<gene>
    <name type="primary">TNNT3</name>
</gene>
<reference key="1">
    <citation type="journal article" date="2006" name="Biosci. Biotechnol. Biochem.">
        <title>Amino acid sequences of porcine fast and slow troponin T isoforms.</title>
        <authorList>
            <person name="Kitamura S."/>
            <person name="Muroya S."/>
            <person name="Nakajima I."/>
            <person name="Chikuni K."/>
            <person name="Nishimura T."/>
        </authorList>
    </citation>
    <scope>NUCLEOTIDE SEQUENCE [MRNA]</scope>
    <source>
        <strain>Landrace x Large White x Duroc</strain>
        <tissue>Skeletal muscle</tissue>
    </source>
</reference>
<proteinExistence type="evidence at transcript level"/>
<organism>
    <name type="scientific">Sus scrofa</name>
    <name type="common">Pig</name>
    <dbReference type="NCBI Taxonomy" id="9823"/>
    <lineage>
        <taxon>Eukaryota</taxon>
        <taxon>Metazoa</taxon>
        <taxon>Chordata</taxon>
        <taxon>Craniata</taxon>
        <taxon>Vertebrata</taxon>
        <taxon>Euteleostomi</taxon>
        <taxon>Mammalia</taxon>
        <taxon>Eutheria</taxon>
        <taxon>Laurasiatheria</taxon>
        <taxon>Artiodactyla</taxon>
        <taxon>Suina</taxon>
        <taxon>Suidae</taxon>
        <taxon>Sus</taxon>
    </lineage>
</organism>
<accession>Q75NG9</accession>
<dbReference type="EMBL" id="AB176599">
    <property type="protein sequence ID" value="BAD15381.1"/>
    <property type="molecule type" value="mRNA"/>
</dbReference>
<dbReference type="RefSeq" id="NP_001001863.1">
    <property type="nucleotide sequence ID" value="NM_001001863.2"/>
</dbReference>
<dbReference type="BMRB" id="Q75NG9"/>
<dbReference type="SMR" id="Q75NG9"/>
<dbReference type="FunCoup" id="Q75NG9">
    <property type="interactions" value="416"/>
</dbReference>
<dbReference type="STRING" id="9823.ENSSSCP00000050941"/>
<dbReference type="PeptideAtlas" id="Q75NG9"/>
<dbReference type="Ensembl" id="ENSSSCT00000062917.3">
    <property type="protein sequence ID" value="ENSSSCP00000046823.3"/>
    <property type="gene ID" value="ENSSSCG00000031903.3"/>
</dbReference>
<dbReference type="Ensembl" id="ENSSSCT00025029337.1">
    <property type="protein sequence ID" value="ENSSSCP00025012457.1"/>
    <property type="gene ID" value="ENSSSCG00025020932.1"/>
</dbReference>
<dbReference type="Ensembl" id="ENSSSCT00045008325.1">
    <property type="protein sequence ID" value="ENSSSCP00045005669.1"/>
    <property type="gene ID" value="ENSSSCG00045004918.1"/>
</dbReference>
<dbReference type="Ensembl" id="ENSSSCT00060044605.1">
    <property type="protein sequence ID" value="ENSSSCP00060019024.1"/>
    <property type="gene ID" value="ENSSSCG00060032941.1"/>
</dbReference>
<dbReference type="Ensembl" id="ENSSSCT00065085065.1">
    <property type="protein sequence ID" value="ENSSSCP00065037152.1"/>
    <property type="gene ID" value="ENSSSCG00065061768.1"/>
</dbReference>
<dbReference type="Ensembl" id="ENSSSCT00065085270.1">
    <property type="protein sequence ID" value="ENSSSCP00065037253.1"/>
    <property type="gene ID" value="ENSSSCG00065061768.1"/>
</dbReference>
<dbReference type="Ensembl" id="ENSSSCT00070031488.1">
    <property type="protein sequence ID" value="ENSSSCP00070026249.1"/>
    <property type="gene ID" value="ENSSSCG00070015620.1"/>
</dbReference>
<dbReference type="Ensembl" id="ENSSSCT00105050523">
    <property type="protein sequence ID" value="ENSSSCP00105035568"/>
    <property type="gene ID" value="ENSSSCG00105025766"/>
</dbReference>
<dbReference type="Ensembl" id="ENSSSCT00130074918">
    <property type="protein sequence ID" value="ENSSSCP00130053883"/>
    <property type="gene ID" value="ENSSSCG00130038404"/>
</dbReference>
<dbReference type="GeneID" id="414906"/>
<dbReference type="KEGG" id="ssc:414906"/>
<dbReference type="CTD" id="7140"/>
<dbReference type="VGNC" id="VGNC:94285">
    <property type="gene designation" value="TNNT3"/>
</dbReference>
<dbReference type="GeneTree" id="ENSGT00940000158477"/>
<dbReference type="InParanoid" id="Q75NG9"/>
<dbReference type="OMA" id="YDMQELA"/>
<dbReference type="OrthoDB" id="330499at2759"/>
<dbReference type="Reactome" id="R-SSC-390522">
    <property type="pathway name" value="Striated Muscle Contraction"/>
</dbReference>
<dbReference type="Proteomes" id="UP000008227">
    <property type="component" value="Chromosome 2"/>
</dbReference>
<dbReference type="Proteomes" id="UP000314985">
    <property type="component" value="Unassembled WGS sequence"/>
</dbReference>
<dbReference type="Proteomes" id="UP000694570">
    <property type="component" value="Unplaced"/>
</dbReference>
<dbReference type="Proteomes" id="UP000694571">
    <property type="component" value="Unplaced"/>
</dbReference>
<dbReference type="Proteomes" id="UP000694720">
    <property type="component" value="Unplaced"/>
</dbReference>
<dbReference type="Proteomes" id="UP000694722">
    <property type="component" value="Unplaced"/>
</dbReference>
<dbReference type="Proteomes" id="UP000694723">
    <property type="component" value="Unplaced"/>
</dbReference>
<dbReference type="Proteomes" id="UP000694724">
    <property type="component" value="Unplaced"/>
</dbReference>
<dbReference type="Proteomes" id="UP000694725">
    <property type="component" value="Unplaced"/>
</dbReference>
<dbReference type="Proteomes" id="UP000694726">
    <property type="component" value="Unplaced"/>
</dbReference>
<dbReference type="Proteomes" id="UP000694727">
    <property type="component" value="Unplaced"/>
</dbReference>
<dbReference type="Proteomes" id="UP000694728">
    <property type="component" value="Unplaced"/>
</dbReference>
<dbReference type="GO" id="GO:0005861">
    <property type="term" value="C:troponin complex"/>
    <property type="evidence" value="ECO:0007669"/>
    <property type="project" value="Ensembl"/>
</dbReference>
<dbReference type="GO" id="GO:0003779">
    <property type="term" value="F:actin binding"/>
    <property type="evidence" value="ECO:0007669"/>
    <property type="project" value="Ensembl"/>
</dbReference>
<dbReference type="GO" id="GO:0048306">
    <property type="term" value="F:calcium-dependent protein binding"/>
    <property type="evidence" value="ECO:0007669"/>
    <property type="project" value="Ensembl"/>
</dbReference>
<dbReference type="GO" id="GO:0005523">
    <property type="term" value="F:tropomyosin binding"/>
    <property type="evidence" value="ECO:0007669"/>
    <property type="project" value="Ensembl"/>
</dbReference>
<dbReference type="GO" id="GO:0030172">
    <property type="term" value="F:troponin C binding"/>
    <property type="evidence" value="ECO:0007669"/>
    <property type="project" value="Ensembl"/>
</dbReference>
<dbReference type="GO" id="GO:0031013">
    <property type="term" value="F:troponin I binding"/>
    <property type="evidence" value="ECO:0007669"/>
    <property type="project" value="Ensembl"/>
</dbReference>
<dbReference type="GO" id="GO:0006942">
    <property type="term" value="P:regulation of striated muscle contraction"/>
    <property type="evidence" value="ECO:0007669"/>
    <property type="project" value="Ensembl"/>
</dbReference>
<dbReference type="GO" id="GO:0003009">
    <property type="term" value="P:skeletal muscle contraction"/>
    <property type="evidence" value="ECO:0007669"/>
    <property type="project" value="Ensembl"/>
</dbReference>
<dbReference type="FunFam" id="1.20.5.350:FF:000001">
    <property type="entry name" value="Troponin T, fast skeletal muscle"/>
    <property type="match status" value="1"/>
</dbReference>
<dbReference type="Gene3D" id="1.20.5.350">
    <property type="match status" value="1"/>
</dbReference>
<dbReference type="InterPro" id="IPR027707">
    <property type="entry name" value="TNNT"/>
</dbReference>
<dbReference type="InterPro" id="IPR001978">
    <property type="entry name" value="Troponin"/>
</dbReference>
<dbReference type="InterPro" id="IPR038077">
    <property type="entry name" value="Troponin_sf"/>
</dbReference>
<dbReference type="PANTHER" id="PTHR11521">
    <property type="entry name" value="TROPONIN T"/>
    <property type="match status" value="1"/>
</dbReference>
<dbReference type="PANTHER" id="PTHR11521:SF4">
    <property type="entry name" value="TROPONIN T, FAST SKELETAL MUSCLE"/>
    <property type="match status" value="1"/>
</dbReference>
<dbReference type="Pfam" id="PF00992">
    <property type="entry name" value="Troponin"/>
    <property type="match status" value="1"/>
</dbReference>
<dbReference type="SUPFAM" id="SSF90250">
    <property type="entry name" value="Troponin coil-coiled subunits"/>
    <property type="match status" value="1"/>
</dbReference>
<keyword id="KW-0007">Acetylation</keyword>
<keyword id="KW-0514">Muscle protein</keyword>
<keyword id="KW-0597">Phosphoprotein</keyword>
<keyword id="KW-1185">Reference proteome</keyword>
<name>TNNT3_PIG</name>
<comment type="function">
    <text evidence="1">Troponin T is the tropomyosin-binding subunit of troponin, the thin filament regulatory complex which confers calcium-sensitivity to striated muscle actomyosin ATPase activity.</text>
</comment>
<comment type="similarity">
    <text evidence="6">Belongs to the troponin T family.</text>
</comment>
<protein>
    <recommendedName>
        <fullName>Troponin T, fast skeletal muscle</fullName>
        <shortName>TnTf</shortName>
    </recommendedName>
</protein>
<sequence length="271" mass="32176">MSDEEVEHVEEEYEEEEEAQEEAPPPPAEVHEVHEEVHEVHEPEEVQEEEKPRPKLTAPKIPEGEKVDFDDIQKKRQNKDLMELQALIDSHFEARKKEEEELVALKERIEKRRAERAEQQRIRAEKERERQNRLAEEKARREEEEAKRRAEDDLKKKKALSSMGANYSSYLAKADQKRGKKQTAREMKKKVLAERRKPLNIDHLSEDKLRDKAKELWDALYQLEIDKFEYGEKLKRQKYDIINLRSRIDQAQKHSKKAGTTPKGKVGGRWK</sequence>
<evidence type="ECO:0000250" key="1"/>
<evidence type="ECO:0000250" key="2">
    <source>
        <dbReference type="UniProtKB" id="P02641"/>
    </source>
</evidence>
<evidence type="ECO:0000250" key="3">
    <source>
        <dbReference type="UniProtKB" id="P09739"/>
    </source>
</evidence>
<evidence type="ECO:0000250" key="4">
    <source>
        <dbReference type="UniProtKB" id="Q9QZ47"/>
    </source>
</evidence>
<evidence type="ECO:0000256" key="5">
    <source>
        <dbReference type="SAM" id="MobiDB-lite"/>
    </source>
</evidence>
<evidence type="ECO:0000305" key="6"/>
<feature type="initiator methionine" description="Removed" evidence="2">
    <location>
        <position position="1"/>
    </location>
</feature>
<feature type="chain" id="PRO_0000345626" description="Troponin T, fast skeletal muscle">
    <location>
        <begin position="2"/>
        <end position="271"/>
    </location>
</feature>
<feature type="region of interest" description="Disordered" evidence="5">
    <location>
        <begin position="1"/>
        <end position="74"/>
    </location>
</feature>
<feature type="region of interest" description="Disordered" evidence="5">
    <location>
        <begin position="113"/>
        <end position="192"/>
    </location>
</feature>
<feature type="region of interest" description="Disordered" evidence="5">
    <location>
        <begin position="249"/>
        <end position="271"/>
    </location>
</feature>
<feature type="compositionally biased region" description="Acidic residues" evidence="5">
    <location>
        <begin position="1"/>
        <end position="21"/>
    </location>
</feature>
<feature type="compositionally biased region" description="Basic and acidic residues" evidence="5">
    <location>
        <begin position="29"/>
        <end position="53"/>
    </location>
</feature>
<feature type="compositionally biased region" description="Basic and acidic residues" evidence="5">
    <location>
        <begin position="62"/>
        <end position="74"/>
    </location>
</feature>
<feature type="compositionally biased region" description="Basic and acidic residues" evidence="5">
    <location>
        <begin position="113"/>
        <end position="155"/>
    </location>
</feature>
<feature type="compositionally biased region" description="Basic and acidic residues" evidence="5">
    <location>
        <begin position="183"/>
        <end position="192"/>
    </location>
</feature>
<feature type="modified residue" description="N-acetylserine" evidence="2">
    <location>
        <position position="2"/>
    </location>
</feature>
<feature type="modified residue" description="Phosphoserine" evidence="3">
    <location>
        <position position="2"/>
    </location>
</feature>
<feature type="modified residue" description="Phosphoserine" evidence="3">
    <location>
        <position position="90"/>
    </location>
</feature>
<feature type="modified residue" description="Phosphoserine" evidence="4">
    <location>
        <position position="161"/>
    </location>
</feature>
<feature type="modified residue" description="Phosphoserine" evidence="3">
    <location>
        <position position="168"/>
    </location>
</feature>
<feature type="modified residue" description="Phosphoserine" evidence="3">
    <location>
        <position position="169"/>
    </location>
</feature>
<feature type="modified residue" description="Phosphoserine" evidence="3">
    <location>
        <position position="205"/>
    </location>
</feature>
<feature type="modified residue" description="Phosphotyrosine" evidence="3">
    <location>
        <position position="221"/>
    </location>
</feature>